<evidence type="ECO:0000255" key="1"/>
<evidence type="ECO:0000256" key="2">
    <source>
        <dbReference type="SAM" id="MobiDB-lite"/>
    </source>
</evidence>
<evidence type="ECO:0000269" key="3">
    <source>
    </source>
</evidence>
<evidence type="ECO:0000305" key="4"/>
<gene>
    <name type="primary">NDL1</name>
    <name type="ordered locus">YLR254C</name>
</gene>
<feature type="chain" id="PRO_0000240229" description="Nuclear distribution protein nudE homolog 1">
    <location>
        <begin position="1"/>
        <end position="189"/>
    </location>
</feature>
<feature type="region of interest" description="Disordered" evidence="2">
    <location>
        <begin position="114"/>
        <end position="139"/>
    </location>
</feature>
<feature type="coiled-coil region" evidence="1">
    <location>
        <begin position="4"/>
        <end position="121"/>
    </location>
</feature>
<feature type="compositionally biased region" description="Basic and acidic residues" evidence="2">
    <location>
        <begin position="114"/>
        <end position="126"/>
    </location>
</feature>
<sequence length="189" mass="21530">MVPNLDLETAIQIISSLETQLSELEGATKEYENDLEQVISKLKSDLLESQQQNKCNKKQITDLEIQVDELENENIQLRNKIETLQLESDRRLERNVLLEHELLDTKEALQKLRVSKEEATSGETRRNTRSLPSQNKKMKLFKDTIKVSTTSSTLYLQNMAKTNNAARSHCNIPNTQITQSTVIATTSSV</sequence>
<reference key="1">
    <citation type="journal article" date="1997" name="Nature">
        <title>The nucleotide sequence of Saccharomyces cerevisiae chromosome XII.</title>
        <authorList>
            <person name="Johnston M."/>
            <person name="Hillier L.W."/>
            <person name="Riles L."/>
            <person name="Albermann K."/>
            <person name="Andre B."/>
            <person name="Ansorge W."/>
            <person name="Benes V."/>
            <person name="Brueckner M."/>
            <person name="Delius H."/>
            <person name="Dubois E."/>
            <person name="Duesterhoeft A."/>
            <person name="Entian K.-D."/>
            <person name="Floeth M."/>
            <person name="Goffeau A."/>
            <person name="Hebling U."/>
            <person name="Heumann K."/>
            <person name="Heuss-Neitzel D."/>
            <person name="Hilbert H."/>
            <person name="Hilger F."/>
            <person name="Kleine K."/>
            <person name="Koetter P."/>
            <person name="Louis E.J."/>
            <person name="Messenguy F."/>
            <person name="Mewes H.-W."/>
            <person name="Miosga T."/>
            <person name="Moestl D."/>
            <person name="Mueller-Auer S."/>
            <person name="Nentwich U."/>
            <person name="Obermaier B."/>
            <person name="Piravandi E."/>
            <person name="Pohl T.M."/>
            <person name="Portetelle D."/>
            <person name="Purnelle B."/>
            <person name="Rechmann S."/>
            <person name="Rieger M."/>
            <person name="Rinke M."/>
            <person name="Rose M."/>
            <person name="Scharfe M."/>
            <person name="Scherens B."/>
            <person name="Scholler P."/>
            <person name="Schwager C."/>
            <person name="Schwarz S."/>
            <person name="Underwood A.P."/>
            <person name="Urrestarazu L.A."/>
            <person name="Vandenbol M."/>
            <person name="Verhasselt P."/>
            <person name="Vierendeels F."/>
            <person name="Voet M."/>
            <person name="Volckaert G."/>
            <person name="Voss H."/>
            <person name="Wambutt R."/>
            <person name="Wedler E."/>
            <person name="Wedler H."/>
            <person name="Zimmermann F.K."/>
            <person name="Zollner A."/>
            <person name="Hani J."/>
            <person name="Hoheisel J.D."/>
        </authorList>
    </citation>
    <scope>NUCLEOTIDE SEQUENCE [LARGE SCALE GENOMIC DNA]</scope>
    <source>
        <strain>ATCC 204508 / S288c</strain>
    </source>
</reference>
<reference key="2">
    <citation type="journal article" date="2014" name="G3 (Bethesda)">
        <title>The reference genome sequence of Saccharomyces cerevisiae: Then and now.</title>
        <authorList>
            <person name="Engel S.R."/>
            <person name="Dietrich F.S."/>
            <person name="Fisk D.G."/>
            <person name="Binkley G."/>
            <person name="Balakrishnan R."/>
            <person name="Costanzo M.C."/>
            <person name="Dwight S.S."/>
            <person name="Hitz B.C."/>
            <person name="Karra K."/>
            <person name="Nash R.S."/>
            <person name="Weng S."/>
            <person name="Wong E.D."/>
            <person name="Lloyd P."/>
            <person name="Skrzypek M.S."/>
            <person name="Miyasato S.R."/>
            <person name="Simison M."/>
            <person name="Cherry J.M."/>
        </authorList>
    </citation>
    <scope>GENOME REANNOTATION</scope>
    <source>
        <strain>ATCC 204508 / S288c</strain>
    </source>
</reference>
<reference key="3">
    <citation type="journal article" date="2007" name="Genome Res.">
        <title>Approaching a complete repository of sequence-verified protein-encoding clones for Saccharomyces cerevisiae.</title>
        <authorList>
            <person name="Hu Y."/>
            <person name="Rolfs A."/>
            <person name="Bhullar B."/>
            <person name="Murthy T.V.S."/>
            <person name="Zhu C."/>
            <person name="Berger M.F."/>
            <person name="Camargo A.A."/>
            <person name="Kelley F."/>
            <person name="McCarron S."/>
            <person name="Jepson D."/>
            <person name="Richardson A."/>
            <person name="Raphael J."/>
            <person name="Moreira D."/>
            <person name="Taycher E."/>
            <person name="Zuo D."/>
            <person name="Mohr S."/>
            <person name="Kane M.F."/>
            <person name="Williamson J."/>
            <person name="Simpson A.J.G."/>
            <person name="Bulyk M.L."/>
            <person name="Harlow E."/>
            <person name="Marsischky G."/>
            <person name="Kolodner R.D."/>
            <person name="LaBaer J."/>
        </authorList>
    </citation>
    <scope>NUCLEOTIDE SEQUENCE [GENOMIC DNA]</scope>
    <source>
        <strain>ATCC 204508 / S288c</strain>
    </source>
</reference>
<reference key="4">
    <citation type="journal article" date="2005" name="Nat. Cell Biol.">
        <title>NudEL targets dynein to microtubule ends through LIS1.</title>
        <authorList>
            <person name="Li J."/>
            <person name="Lee W.-L."/>
            <person name="Cooper J.A."/>
        </authorList>
    </citation>
    <scope>FUNCTION</scope>
    <scope>SELF-ASSOCIATION</scope>
    <scope>INTERACTION WITH PAC1</scope>
    <scope>SUBCELLULAR LOCATION</scope>
</reference>
<proteinExistence type="evidence at protein level"/>
<accession>Q06568</accession>
<accession>D6VYQ1</accession>
<protein>
    <recommendedName>
        <fullName>Nuclear distribution protein nudE homolog 1</fullName>
    </recommendedName>
    <alternativeName>
        <fullName>Nuclear distribution protein nudE-like 1</fullName>
    </alternativeName>
</protein>
<dbReference type="EMBL" id="U20865">
    <property type="protein sequence ID" value="AAB67401.1"/>
    <property type="molecule type" value="Genomic_DNA"/>
</dbReference>
<dbReference type="EMBL" id="AY558212">
    <property type="protein sequence ID" value="AAS56538.1"/>
    <property type="molecule type" value="Genomic_DNA"/>
</dbReference>
<dbReference type="EMBL" id="BK006945">
    <property type="protein sequence ID" value="DAA09567.1"/>
    <property type="molecule type" value="Genomic_DNA"/>
</dbReference>
<dbReference type="PIR" id="S59399">
    <property type="entry name" value="S59399"/>
</dbReference>
<dbReference type="RefSeq" id="NP_013355.1">
    <property type="nucleotide sequence ID" value="NM_001182141.1"/>
</dbReference>
<dbReference type="SMR" id="Q06568"/>
<dbReference type="BioGRID" id="31521">
    <property type="interactions" value="296"/>
</dbReference>
<dbReference type="DIP" id="DIP-1486N"/>
<dbReference type="FunCoup" id="Q06568">
    <property type="interactions" value="507"/>
</dbReference>
<dbReference type="IntAct" id="Q06568">
    <property type="interactions" value="6"/>
</dbReference>
<dbReference type="MINT" id="Q06568"/>
<dbReference type="STRING" id="4932.YLR254C"/>
<dbReference type="GlyGen" id="Q06568">
    <property type="glycosylation" value="2 sites, 1 O-linked glycan (2 sites)"/>
</dbReference>
<dbReference type="PaxDb" id="4932-YLR254C"/>
<dbReference type="PeptideAtlas" id="Q06568"/>
<dbReference type="EnsemblFungi" id="YLR254C_mRNA">
    <property type="protein sequence ID" value="YLR254C"/>
    <property type="gene ID" value="YLR254C"/>
</dbReference>
<dbReference type="GeneID" id="850956"/>
<dbReference type="KEGG" id="sce:YLR254C"/>
<dbReference type="AGR" id="SGD:S000004244"/>
<dbReference type="SGD" id="S000004244">
    <property type="gene designation" value="NDL1"/>
</dbReference>
<dbReference type="VEuPathDB" id="FungiDB:YLR254C"/>
<dbReference type="eggNOG" id="ENOG502S6CQ">
    <property type="taxonomic scope" value="Eukaryota"/>
</dbReference>
<dbReference type="HOGENOM" id="CLU_125075_0_0_1"/>
<dbReference type="InParanoid" id="Q06568"/>
<dbReference type="OMA" id="EHELAYM"/>
<dbReference type="OrthoDB" id="4035460at2759"/>
<dbReference type="BioCyc" id="YEAST:G3O-32358-MONOMER"/>
<dbReference type="BioGRID-ORCS" id="850956">
    <property type="hits" value="2 hits in 10 CRISPR screens"/>
</dbReference>
<dbReference type="PRO" id="PR:Q06568"/>
<dbReference type="Proteomes" id="UP000002311">
    <property type="component" value="Chromosome XII"/>
</dbReference>
<dbReference type="RNAct" id="Q06568">
    <property type="molecule type" value="protein"/>
</dbReference>
<dbReference type="GO" id="GO:0005737">
    <property type="term" value="C:cytoplasm"/>
    <property type="evidence" value="ECO:0007005"/>
    <property type="project" value="SGD"/>
</dbReference>
<dbReference type="GO" id="GO:0005881">
    <property type="term" value="C:cytoplasmic microtubule"/>
    <property type="evidence" value="ECO:0000314"/>
    <property type="project" value="SGD"/>
</dbReference>
<dbReference type="GO" id="GO:0005634">
    <property type="term" value="C:nucleus"/>
    <property type="evidence" value="ECO:0000314"/>
    <property type="project" value="SGD"/>
</dbReference>
<dbReference type="GO" id="GO:0005777">
    <property type="term" value="C:peroxisome"/>
    <property type="evidence" value="ECO:0000314"/>
    <property type="project" value="SGD"/>
</dbReference>
<dbReference type="GO" id="GO:0051010">
    <property type="term" value="F:microtubule plus-end binding"/>
    <property type="evidence" value="ECO:0000314"/>
    <property type="project" value="SGD"/>
</dbReference>
<dbReference type="GO" id="GO:0051301">
    <property type="term" value="P:cell division"/>
    <property type="evidence" value="ECO:0007669"/>
    <property type="project" value="UniProtKB-KW"/>
</dbReference>
<dbReference type="GO" id="GO:0030473">
    <property type="term" value="P:nuclear migration along microtubule"/>
    <property type="evidence" value="ECO:0000315"/>
    <property type="project" value="SGD"/>
</dbReference>
<dbReference type="Gene3D" id="6.10.250.1080">
    <property type="match status" value="1"/>
</dbReference>
<name>NDE1_YEAST</name>
<comment type="function">
    <text evidence="3">Required for nuclear migration to the bud neck during cell division. Targets cytoplasmic dynein to microtubule plus ends thereby promoting dynein-mediated microtubule sliding along the bud cortex and consequently the movement of the mitotic spindle to the bud neck.</text>
</comment>
<comment type="subunit">
    <text evidence="3">Self-associates. Interacts with PAC1.</text>
</comment>
<comment type="subcellular location">
    <subcellularLocation>
        <location evidence="3">Nucleus</location>
    </subcellularLocation>
    <subcellularLocation>
        <location evidence="3">Cytoplasm</location>
        <location evidence="3">Cytoskeleton</location>
    </subcellularLocation>
    <text>Also localizes to the plus ends of cytoplasmic microtubules, and this requires PAC1.</text>
</comment>
<comment type="similarity">
    <text evidence="4">Belongs to the nudE family.</text>
</comment>
<keyword id="KW-0131">Cell cycle</keyword>
<keyword id="KW-0132">Cell division</keyword>
<keyword id="KW-0175">Coiled coil</keyword>
<keyword id="KW-0963">Cytoplasm</keyword>
<keyword id="KW-0206">Cytoskeleton</keyword>
<keyword id="KW-0493">Microtubule</keyword>
<keyword id="KW-0498">Mitosis</keyword>
<keyword id="KW-0539">Nucleus</keyword>
<keyword id="KW-1185">Reference proteome</keyword>
<keyword id="KW-0813">Transport</keyword>
<organism>
    <name type="scientific">Saccharomyces cerevisiae (strain ATCC 204508 / S288c)</name>
    <name type="common">Baker's yeast</name>
    <dbReference type="NCBI Taxonomy" id="559292"/>
    <lineage>
        <taxon>Eukaryota</taxon>
        <taxon>Fungi</taxon>
        <taxon>Dikarya</taxon>
        <taxon>Ascomycota</taxon>
        <taxon>Saccharomycotina</taxon>
        <taxon>Saccharomycetes</taxon>
        <taxon>Saccharomycetales</taxon>
        <taxon>Saccharomycetaceae</taxon>
        <taxon>Saccharomyces</taxon>
    </lineage>
</organism>